<protein>
    <recommendedName>
        <fullName evidence="1">Ribosome maturation factor RimP</fullName>
    </recommendedName>
</protein>
<evidence type="ECO:0000255" key="1">
    <source>
        <dbReference type="HAMAP-Rule" id="MF_01077"/>
    </source>
</evidence>
<accession>A7H9F0</accession>
<reference key="1">
    <citation type="journal article" date="2015" name="Genome Announc.">
        <title>Complete genome sequence of Anaeromyxobacter sp. Fw109-5, an anaerobic, metal-reducing bacterium isolated from a contaminated subsurface environment.</title>
        <authorList>
            <person name="Hwang C."/>
            <person name="Copeland A."/>
            <person name="Lucas S."/>
            <person name="Lapidus A."/>
            <person name="Barry K."/>
            <person name="Glavina Del Rio T."/>
            <person name="Dalin E."/>
            <person name="Tice H."/>
            <person name="Pitluck S."/>
            <person name="Sims D."/>
            <person name="Brettin T."/>
            <person name="Bruce D.C."/>
            <person name="Detter J.C."/>
            <person name="Han C.S."/>
            <person name="Schmutz J."/>
            <person name="Larimer F.W."/>
            <person name="Land M.L."/>
            <person name="Hauser L.J."/>
            <person name="Kyrpides N."/>
            <person name="Lykidis A."/>
            <person name="Richardson P."/>
            <person name="Belieav A."/>
            <person name="Sanford R.A."/>
            <person name="Loeffler F.E."/>
            <person name="Fields M.W."/>
        </authorList>
    </citation>
    <scope>NUCLEOTIDE SEQUENCE [LARGE SCALE GENOMIC DNA]</scope>
    <source>
        <strain>Fw109-5</strain>
    </source>
</reference>
<feature type="chain" id="PRO_0000384601" description="Ribosome maturation factor RimP">
    <location>
        <begin position="1"/>
        <end position="171"/>
    </location>
</feature>
<proteinExistence type="inferred from homology"/>
<comment type="function">
    <text evidence="1">Required for maturation of 30S ribosomal subunits.</text>
</comment>
<comment type="subcellular location">
    <subcellularLocation>
        <location evidence="1">Cytoplasm</location>
    </subcellularLocation>
</comment>
<comment type="similarity">
    <text evidence="1">Belongs to the RimP family.</text>
</comment>
<dbReference type="EMBL" id="CP000769">
    <property type="protein sequence ID" value="ABS25346.1"/>
    <property type="molecule type" value="Genomic_DNA"/>
</dbReference>
<dbReference type="RefSeq" id="WP_011985452.1">
    <property type="nucleotide sequence ID" value="NC_009675.1"/>
</dbReference>
<dbReference type="SMR" id="A7H9F0"/>
<dbReference type="STRING" id="404589.Anae109_1138"/>
<dbReference type="KEGG" id="afw:Anae109_1138"/>
<dbReference type="eggNOG" id="COG0779">
    <property type="taxonomic scope" value="Bacteria"/>
</dbReference>
<dbReference type="HOGENOM" id="CLU_070525_2_2_7"/>
<dbReference type="OrthoDB" id="9805006at2"/>
<dbReference type="Proteomes" id="UP000006382">
    <property type="component" value="Chromosome"/>
</dbReference>
<dbReference type="GO" id="GO:0005829">
    <property type="term" value="C:cytosol"/>
    <property type="evidence" value="ECO:0007669"/>
    <property type="project" value="TreeGrafter"/>
</dbReference>
<dbReference type="GO" id="GO:0000028">
    <property type="term" value="P:ribosomal small subunit assembly"/>
    <property type="evidence" value="ECO:0007669"/>
    <property type="project" value="TreeGrafter"/>
</dbReference>
<dbReference type="GO" id="GO:0006412">
    <property type="term" value="P:translation"/>
    <property type="evidence" value="ECO:0007669"/>
    <property type="project" value="TreeGrafter"/>
</dbReference>
<dbReference type="CDD" id="cd01734">
    <property type="entry name" value="YlxS_C"/>
    <property type="match status" value="1"/>
</dbReference>
<dbReference type="FunFam" id="3.30.300.70:FF:000001">
    <property type="entry name" value="Ribosome maturation factor RimP"/>
    <property type="match status" value="1"/>
</dbReference>
<dbReference type="Gene3D" id="2.30.30.180">
    <property type="entry name" value="Ribosome maturation factor RimP, C-terminal domain"/>
    <property type="match status" value="1"/>
</dbReference>
<dbReference type="Gene3D" id="3.30.300.70">
    <property type="entry name" value="RimP-like superfamily, N-terminal"/>
    <property type="match status" value="1"/>
</dbReference>
<dbReference type="HAMAP" id="MF_01077">
    <property type="entry name" value="RimP"/>
    <property type="match status" value="1"/>
</dbReference>
<dbReference type="InterPro" id="IPR003728">
    <property type="entry name" value="Ribosome_maturation_RimP"/>
</dbReference>
<dbReference type="InterPro" id="IPR028998">
    <property type="entry name" value="RimP_C"/>
</dbReference>
<dbReference type="InterPro" id="IPR036847">
    <property type="entry name" value="RimP_C_sf"/>
</dbReference>
<dbReference type="InterPro" id="IPR028989">
    <property type="entry name" value="RimP_N"/>
</dbReference>
<dbReference type="InterPro" id="IPR035956">
    <property type="entry name" value="RimP_N_sf"/>
</dbReference>
<dbReference type="PANTHER" id="PTHR33867">
    <property type="entry name" value="RIBOSOME MATURATION FACTOR RIMP"/>
    <property type="match status" value="1"/>
</dbReference>
<dbReference type="PANTHER" id="PTHR33867:SF1">
    <property type="entry name" value="RIBOSOME MATURATION FACTOR RIMP"/>
    <property type="match status" value="1"/>
</dbReference>
<dbReference type="Pfam" id="PF17384">
    <property type="entry name" value="DUF150_C"/>
    <property type="match status" value="1"/>
</dbReference>
<dbReference type="Pfam" id="PF02576">
    <property type="entry name" value="RimP_N"/>
    <property type="match status" value="1"/>
</dbReference>
<dbReference type="SUPFAM" id="SSF74942">
    <property type="entry name" value="YhbC-like, C-terminal domain"/>
    <property type="match status" value="1"/>
</dbReference>
<dbReference type="SUPFAM" id="SSF75420">
    <property type="entry name" value="YhbC-like, N-terminal domain"/>
    <property type="match status" value="1"/>
</dbReference>
<keyword id="KW-0963">Cytoplasm</keyword>
<keyword id="KW-1185">Reference proteome</keyword>
<keyword id="KW-0690">Ribosome biogenesis</keyword>
<organism>
    <name type="scientific">Anaeromyxobacter sp. (strain Fw109-5)</name>
    <dbReference type="NCBI Taxonomy" id="404589"/>
    <lineage>
        <taxon>Bacteria</taxon>
        <taxon>Pseudomonadati</taxon>
        <taxon>Myxococcota</taxon>
        <taxon>Myxococcia</taxon>
        <taxon>Myxococcales</taxon>
        <taxon>Cystobacterineae</taxon>
        <taxon>Anaeromyxobacteraceae</taxon>
        <taxon>Anaeromyxobacter</taxon>
    </lineage>
</organism>
<name>RIMP_ANADF</name>
<gene>
    <name evidence="1" type="primary">rimP</name>
    <name type="ordered locus">Anae109_1138</name>
</gene>
<sequence>MPGIAEESIAERTRRVLEPVLARDGYELVEVEWLRQGSRWTLRLFVDKPGGVGIEDCQAVSRLVDPILDVEDFIEPAYDLEVSSPGLDRPLRKPADFDRYAGQRAHVKAYGPVAGTAPGSPARKNWTGVLVGYRDGAVEIDVDGVVHRVPHDQIAKAHLEYDFEADLRRKD</sequence>